<proteinExistence type="inferred from homology"/>
<keyword id="KW-0030">Aminoacyl-tRNA synthetase</keyword>
<keyword id="KW-0067">ATP-binding</keyword>
<keyword id="KW-0963">Cytoplasm</keyword>
<keyword id="KW-0436">Ligase</keyword>
<keyword id="KW-0479">Metal-binding</keyword>
<keyword id="KW-0547">Nucleotide-binding</keyword>
<keyword id="KW-0648">Protein biosynthesis</keyword>
<keyword id="KW-0862">Zinc</keyword>
<gene>
    <name evidence="1" type="primary">ileS</name>
    <name type="ordered locus">PSPA7_5200</name>
</gene>
<organism>
    <name type="scientific">Pseudomonas paraeruginosa (strain DSM 24068 / PA7)</name>
    <name type="common">Pseudomonas aeruginosa (strain PA7)</name>
    <dbReference type="NCBI Taxonomy" id="381754"/>
    <lineage>
        <taxon>Bacteria</taxon>
        <taxon>Pseudomonadati</taxon>
        <taxon>Pseudomonadota</taxon>
        <taxon>Gammaproteobacteria</taxon>
        <taxon>Pseudomonadales</taxon>
        <taxon>Pseudomonadaceae</taxon>
        <taxon>Pseudomonas</taxon>
        <taxon>Pseudomonas paraeruginosa</taxon>
    </lineage>
</organism>
<reference key="1">
    <citation type="submission" date="2007-06" db="EMBL/GenBank/DDBJ databases">
        <authorList>
            <person name="Dodson R.J."/>
            <person name="Harkins D."/>
            <person name="Paulsen I.T."/>
        </authorList>
    </citation>
    <scope>NUCLEOTIDE SEQUENCE [LARGE SCALE GENOMIC DNA]</scope>
    <source>
        <strain>DSM 24068 / PA7</strain>
    </source>
</reference>
<accession>A6VBU7</accession>
<feature type="chain" id="PRO_1000022103" description="Isoleucine--tRNA ligase">
    <location>
        <begin position="1"/>
        <end position="943"/>
    </location>
</feature>
<feature type="short sequence motif" description="'HIGH' region">
    <location>
        <begin position="58"/>
        <end position="68"/>
    </location>
</feature>
<feature type="short sequence motif" description="'KMSKS' region">
    <location>
        <begin position="608"/>
        <end position="612"/>
    </location>
</feature>
<feature type="binding site" evidence="1">
    <location>
        <position position="567"/>
    </location>
    <ligand>
        <name>L-isoleucyl-5'-AMP</name>
        <dbReference type="ChEBI" id="CHEBI:178002"/>
    </ligand>
</feature>
<feature type="binding site" evidence="1">
    <location>
        <position position="611"/>
    </location>
    <ligand>
        <name>ATP</name>
        <dbReference type="ChEBI" id="CHEBI:30616"/>
    </ligand>
</feature>
<feature type="binding site" evidence="1">
    <location>
        <position position="906"/>
    </location>
    <ligand>
        <name>Zn(2+)</name>
        <dbReference type="ChEBI" id="CHEBI:29105"/>
    </ligand>
</feature>
<feature type="binding site" evidence="1">
    <location>
        <position position="909"/>
    </location>
    <ligand>
        <name>Zn(2+)</name>
        <dbReference type="ChEBI" id="CHEBI:29105"/>
    </ligand>
</feature>
<feature type="binding site" evidence="1">
    <location>
        <position position="926"/>
    </location>
    <ligand>
        <name>Zn(2+)</name>
        <dbReference type="ChEBI" id="CHEBI:29105"/>
    </ligand>
</feature>
<feature type="binding site" evidence="1">
    <location>
        <position position="929"/>
    </location>
    <ligand>
        <name>Zn(2+)</name>
        <dbReference type="ChEBI" id="CHEBI:29105"/>
    </ligand>
</feature>
<name>SYI_PSEP7</name>
<evidence type="ECO:0000255" key="1">
    <source>
        <dbReference type="HAMAP-Rule" id="MF_02002"/>
    </source>
</evidence>
<protein>
    <recommendedName>
        <fullName evidence="1">Isoleucine--tRNA ligase</fullName>
        <ecNumber evidence="1">6.1.1.5</ecNumber>
    </recommendedName>
    <alternativeName>
        <fullName evidence="1">Isoleucyl-tRNA synthetase</fullName>
        <shortName evidence="1">IleRS</shortName>
    </alternativeName>
</protein>
<dbReference type="EC" id="6.1.1.5" evidence="1"/>
<dbReference type="EMBL" id="CP000744">
    <property type="protein sequence ID" value="ABR81436.1"/>
    <property type="molecule type" value="Genomic_DNA"/>
</dbReference>
<dbReference type="RefSeq" id="WP_012077314.1">
    <property type="nucleotide sequence ID" value="NC_009656.1"/>
</dbReference>
<dbReference type="SMR" id="A6VBU7"/>
<dbReference type="KEGG" id="pap:PSPA7_5200"/>
<dbReference type="HOGENOM" id="CLU_001493_7_1_6"/>
<dbReference type="Proteomes" id="UP000001582">
    <property type="component" value="Chromosome"/>
</dbReference>
<dbReference type="GO" id="GO:0005829">
    <property type="term" value="C:cytosol"/>
    <property type="evidence" value="ECO:0007669"/>
    <property type="project" value="TreeGrafter"/>
</dbReference>
<dbReference type="GO" id="GO:0002161">
    <property type="term" value="F:aminoacyl-tRNA deacylase activity"/>
    <property type="evidence" value="ECO:0007669"/>
    <property type="project" value="InterPro"/>
</dbReference>
<dbReference type="GO" id="GO:0005524">
    <property type="term" value="F:ATP binding"/>
    <property type="evidence" value="ECO:0007669"/>
    <property type="project" value="UniProtKB-UniRule"/>
</dbReference>
<dbReference type="GO" id="GO:0004822">
    <property type="term" value="F:isoleucine-tRNA ligase activity"/>
    <property type="evidence" value="ECO:0007669"/>
    <property type="project" value="UniProtKB-UniRule"/>
</dbReference>
<dbReference type="GO" id="GO:0000049">
    <property type="term" value="F:tRNA binding"/>
    <property type="evidence" value="ECO:0007669"/>
    <property type="project" value="InterPro"/>
</dbReference>
<dbReference type="GO" id="GO:0008270">
    <property type="term" value="F:zinc ion binding"/>
    <property type="evidence" value="ECO:0007669"/>
    <property type="project" value="UniProtKB-UniRule"/>
</dbReference>
<dbReference type="GO" id="GO:0006428">
    <property type="term" value="P:isoleucyl-tRNA aminoacylation"/>
    <property type="evidence" value="ECO:0007669"/>
    <property type="project" value="UniProtKB-UniRule"/>
</dbReference>
<dbReference type="CDD" id="cd07960">
    <property type="entry name" value="Anticodon_Ia_Ile_BEm"/>
    <property type="match status" value="1"/>
</dbReference>
<dbReference type="CDD" id="cd00818">
    <property type="entry name" value="IleRS_core"/>
    <property type="match status" value="1"/>
</dbReference>
<dbReference type="FunFam" id="1.10.730.20:FF:000001">
    <property type="entry name" value="Isoleucine--tRNA ligase"/>
    <property type="match status" value="1"/>
</dbReference>
<dbReference type="FunFam" id="3.40.50.620:FF:000042">
    <property type="entry name" value="Isoleucine--tRNA ligase"/>
    <property type="match status" value="1"/>
</dbReference>
<dbReference type="FunFam" id="3.40.50.620:FF:000048">
    <property type="entry name" value="Isoleucine--tRNA ligase"/>
    <property type="match status" value="1"/>
</dbReference>
<dbReference type="Gene3D" id="1.10.730.20">
    <property type="match status" value="1"/>
</dbReference>
<dbReference type="Gene3D" id="3.40.50.620">
    <property type="entry name" value="HUPs"/>
    <property type="match status" value="2"/>
</dbReference>
<dbReference type="Gene3D" id="1.10.10.830">
    <property type="entry name" value="Ile-tRNA synthetase CP2 domain-like"/>
    <property type="match status" value="1"/>
</dbReference>
<dbReference type="HAMAP" id="MF_02002">
    <property type="entry name" value="Ile_tRNA_synth_type1"/>
    <property type="match status" value="1"/>
</dbReference>
<dbReference type="InterPro" id="IPR001412">
    <property type="entry name" value="aa-tRNA-synth_I_CS"/>
</dbReference>
<dbReference type="InterPro" id="IPR002300">
    <property type="entry name" value="aa-tRNA-synth_Ia"/>
</dbReference>
<dbReference type="InterPro" id="IPR033708">
    <property type="entry name" value="Anticodon_Ile_BEm"/>
</dbReference>
<dbReference type="InterPro" id="IPR002301">
    <property type="entry name" value="Ile-tRNA-ligase"/>
</dbReference>
<dbReference type="InterPro" id="IPR023585">
    <property type="entry name" value="Ile-tRNA-ligase_type1"/>
</dbReference>
<dbReference type="InterPro" id="IPR050081">
    <property type="entry name" value="Ile-tRNA_ligase"/>
</dbReference>
<dbReference type="InterPro" id="IPR013155">
    <property type="entry name" value="M/V/L/I-tRNA-synth_anticd-bd"/>
</dbReference>
<dbReference type="InterPro" id="IPR014729">
    <property type="entry name" value="Rossmann-like_a/b/a_fold"/>
</dbReference>
<dbReference type="InterPro" id="IPR009080">
    <property type="entry name" value="tRNAsynth_Ia_anticodon-bd"/>
</dbReference>
<dbReference type="InterPro" id="IPR009008">
    <property type="entry name" value="Val/Leu/Ile-tRNA-synth_edit"/>
</dbReference>
<dbReference type="InterPro" id="IPR010663">
    <property type="entry name" value="Znf_FPG/IleRS"/>
</dbReference>
<dbReference type="NCBIfam" id="TIGR00392">
    <property type="entry name" value="ileS"/>
    <property type="match status" value="1"/>
</dbReference>
<dbReference type="PANTHER" id="PTHR42765:SF1">
    <property type="entry name" value="ISOLEUCINE--TRNA LIGASE, MITOCHONDRIAL"/>
    <property type="match status" value="1"/>
</dbReference>
<dbReference type="PANTHER" id="PTHR42765">
    <property type="entry name" value="SOLEUCYL-TRNA SYNTHETASE"/>
    <property type="match status" value="1"/>
</dbReference>
<dbReference type="Pfam" id="PF08264">
    <property type="entry name" value="Anticodon_1"/>
    <property type="match status" value="1"/>
</dbReference>
<dbReference type="Pfam" id="PF00133">
    <property type="entry name" value="tRNA-synt_1"/>
    <property type="match status" value="1"/>
</dbReference>
<dbReference type="Pfam" id="PF06827">
    <property type="entry name" value="zf-FPG_IleRS"/>
    <property type="match status" value="1"/>
</dbReference>
<dbReference type="PRINTS" id="PR00984">
    <property type="entry name" value="TRNASYNTHILE"/>
</dbReference>
<dbReference type="SUPFAM" id="SSF47323">
    <property type="entry name" value="Anticodon-binding domain of a subclass of class I aminoacyl-tRNA synthetases"/>
    <property type="match status" value="1"/>
</dbReference>
<dbReference type="SUPFAM" id="SSF52374">
    <property type="entry name" value="Nucleotidylyl transferase"/>
    <property type="match status" value="1"/>
</dbReference>
<dbReference type="SUPFAM" id="SSF50677">
    <property type="entry name" value="ValRS/IleRS/LeuRS editing domain"/>
    <property type="match status" value="1"/>
</dbReference>
<dbReference type="PROSITE" id="PS00178">
    <property type="entry name" value="AA_TRNA_LIGASE_I"/>
    <property type="match status" value="1"/>
</dbReference>
<sequence length="943" mass="105233">MTDYKATLNLPETAFPMKAGLPQREPETLKFWNDIGLYQKLRAIGGDRPKFVLHDGPPYANGSIHIGHAVNKILKDIIVRSKTLAGYDAPYVPGWDCHGLPIEHKVETTHGKNLPADKTRELCREYAAEQIEGQKADFIRLGVLGEWDNPYKTMAFANEANEIRALAEMVRQDFVFKGLKPVNWCFDCGSALAEAEVEYADKTSPTIDVGFPVADADKLAAAFGLAALDKPAQIVIWTTTPWTIPANQALNVHPEIDYALVDAGDRYLVLAEALVEPCLARYQREGKVVATAKGEALELINFRHPFYERLSPVYLADYVALDAGTGIVHSSPAYGEDDFYTCKRYGMSNDDILSPVQSNGVYVDSLPFFGGQFIWKANPNVVAKLEEVGSLLAHETINHSYMHCWRHKTPLIYRATAQWFVGMDKQPGQGASLRERALEAITQTEFIPGWGQARLHGMIAGRPDWCISRQRNWGVPIPFFLHKASGELHPRTVELMEEVAQRVEKEGIEAWFRLDAAELLGDEAAQYDKISDTLDVWFDSGTTHWHVLRGSHRIGHASGPVADLYLEGSDQHRGWFHSSLLTGCAIDNHAPYRQLLTHGFTVDESGRKMSKSLGNTVVPQTVIDTLGADILRLWVASTDYSGEIAVSQQILQRSADAYRRIRNTTRFLLSNLNGFDPAKDLLPPEEMLALDRWAVDRALLLQREIEEAYREYRFWNVYSKVHNFCVQELGGFYLDIIKDRQYTTGANSVARRSCQTALFHIAEALVRWIAPILAFTAEEVWKFLPGERVESVMLATWYDGLGELPADAALNREYWEQVMAVKAAVNKELENQRAAKAVGGNLQAEVTLYAEDALQASLARLGNELRFVLITSTATLAPLASAPADAVDSEVAGLKLKVVKSAHAKCGRCWHHREDVGQHAAHPELCGRCIENIEGSGEVRHYA</sequence>
<comment type="function">
    <text evidence="1">Catalyzes the attachment of isoleucine to tRNA(Ile). As IleRS can inadvertently accommodate and process structurally similar amino acids such as valine, to avoid such errors it has two additional distinct tRNA(Ile)-dependent editing activities. One activity is designated as 'pretransfer' editing and involves the hydrolysis of activated Val-AMP. The other activity is designated 'posttransfer' editing and involves deacylation of mischarged Val-tRNA(Ile).</text>
</comment>
<comment type="catalytic activity">
    <reaction evidence="1">
        <text>tRNA(Ile) + L-isoleucine + ATP = L-isoleucyl-tRNA(Ile) + AMP + diphosphate</text>
        <dbReference type="Rhea" id="RHEA:11060"/>
        <dbReference type="Rhea" id="RHEA-COMP:9666"/>
        <dbReference type="Rhea" id="RHEA-COMP:9695"/>
        <dbReference type="ChEBI" id="CHEBI:30616"/>
        <dbReference type="ChEBI" id="CHEBI:33019"/>
        <dbReference type="ChEBI" id="CHEBI:58045"/>
        <dbReference type="ChEBI" id="CHEBI:78442"/>
        <dbReference type="ChEBI" id="CHEBI:78528"/>
        <dbReference type="ChEBI" id="CHEBI:456215"/>
        <dbReference type="EC" id="6.1.1.5"/>
    </reaction>
</comment>
<comment type="cofactor">
    <cofactor evidence="1">
        <name>Zn(2+)</name>
        <dbReference type="ChEBI" id="CHEBI:29105"/>
    </cofactor>
    <text evidence="1">Binds 1 zinc ion per subunit.</text>
</comment>
<comment type="subunit">
    <text evidence="1">Monomer.</text>
</comment>
<comment type="subcellular location">
    <subcellularLocation>
        <location evidence="1">Cytoplasm</location>
    </subcellularLocation>
</comment>
<comment type="domain">
    <text evidence="1">IleRS has two distinct active sites: one for aminoacylation and one for editing. The misactivated valine is translocated from the active site to the editing site, which sterically excludes the correctly activated isoleucine. The single editing site contains two valyl binding pockets, one specific for each substrate (Val-AMP or Val-tRNA(Ile)).</text>
</comment>
<comment type="similarity">
    <text evidence="1">Belongs to the class-I aminoacyl-tRNA synthetase family. IleS type 1 subfamily.</text>
</comment>